<dbReference type="EC" id="2.3.1.239" evidence="8 15"/>
<dbReference type="EC" id="2.3.1.240" evidence="8 15"/>
<dbReference type="EMBL" id="AF079138">
    <property type="protein sequence ID" value="AAC69331.1"/>
    <property type="molecule type" value="Genomic_DNA"/>
</dbReference>
<dbReference type="EMBL" id="LN881739">
    <property type="protein sequence ID" value="CUM38836.1"/>
    <property type="molecule type" value="Genomic_DNA"/>
</dbReference>
<dbReference type="PIR" id="T17411">
    <property type="entry name" value="T17411"/>
</dbReference>
<dbReference type="PDB" id="3F5H">
    <property type="method" value="X-ray"/>
    <property type="resolution" value="1.75 A"/>
    <property type="chains" value="A/B=1534-1562"/>
</dbReference>
<dbReference type="PDBsum" id="3F5H"/>
<dbReference type="EMDB" id="EMD-5647"/>
<dbReference type="EMDB" id="EMD-5648"/>
<dbReference type="EMDB" id="EMD-5649"/>
<dbReference type="EMDB" id="EMD-5651"/>
<dbReference type="EMDB" id="EMD-5653"/>
<dbReference type="EMDB" id="EMD-5662"/>
<dbReference type="EMDB" id="EMD-5663"/>
<dbReference type="EMDB" id="EMD-5664"/>
<dbReference type="EMDB" id="EMD-5665"/>
<dbReference type="EMDB" id="EMD-5666"/>
<dbReference type="EMDB" id="EMD-5667"/>
<dbReference type="SMR" id="Q9ZGI3"/>
<dbReference type="DIP" id="DIP-61040N"/>
<dbReference type="KEGG" id="ag:AAC69331"/>
<dbReference type="PATRIC" id="fig|54571.11.peg.3231"/>
<dbReference type="BioCyc" id="MetaCyc:MONOMER-18413"/>
<dbReference type="BRENDA" id="2.3.1.239">
    <property type="organism ID" value="6106"/>
</dbReference>
<dbReference type="BRENDA" id="2.3.1.240">
    <property type="organism ID" value="6106"/>
</dbReference>
<dbReference type="GO" id="GO:0004315">
    <property type="term" value="F:3-oxoacyl-[acyl-carrier-protein] synthase activity"/>
    <property type="evidence" value="ECO:0007669"/>
    <property type="project" value="InterPro"/>
</dbReference>
<dbReference type="GO" id="GO:0016747">
    <property type="term" value="F:acyltransferase activity, transferring groups other than amino-acyl groups"/>
    <property type="evidence" value="ECO:0000314"/>
    <property type="project" value="UniProtKB"/>
</dbReference>
<dbReference type="GO" id="GO:0004312">
    <property type="term" value="F:fatty acid synthase activity"/>
    <property type="evidence" value="ECO:0007669"/>
    <property type="project" value="TreeGrafter"/>
</dbReference>
<dbReference type="GO" id="GO:0042802">
    <property type="term" value="F:identical protein binding"/>
    <property type="evidence" value="ECO:0000353"/>
    <property type="project" value="IntAct"/>
</dbReference>
<dbReference type="GO" id="GO:0031177">
    <property type="term" value="F:phosphopantetheine binding"/>
    <property type="evidence" value="ECO:0000304"/>
    <property type="project" value="UniProtKB"/>
</dbReference>
<dbReference type="GO" id="GO:0006633">
    <property type="term" value="P:fatty acid biosynthetic process"/>
    <property type="evidence" value="ECO:0007669"/>
    <property type="project" value="InterPro"/>
</dbReference>
<dbReference type="GO" id="GO:0033068">
    <property type="term" value="P:macrolide biosynthetic process"/>
    <property type="evidence" value="ECO:0000314"/>
    <property type="project" value="UniProtKB"/>
</dbReference>
<dbReference type="CDD" id="cd08952">
    <property type="entry name" value="KR_1_SDR_x"/>
    <property type="match status" value="1"/>
</dbReference>
<dbReference type="CDD" id="cd00833">
    <property type="entry name" value="PKS"/>
    <property type="match status" value="1"/>
</dbReference>
<dbReference type="FunFam" id="3.40.50.720:FF:000550">
    <property type="entry name" value="AmphB polyketide synthase"/>
    <property type="match status" value="1"/>
</dbReference>
<dbReference type="FunFam" id="3.40.47.10:FF:000019">
    <property type="entry name" value="Polyketide synthase type I"/>
    <property type="match status" value="1"/>
</dbReference>
<dbReference type="FunFam" id="3.40.366.10:FF:000002">
    <property type="entry name" value="Probable polyketide synthase 2"/>
    <property type="match status" value="1"/>
</dbReference>
<dbReference type="FunFam" id="1.10.1200.10:FF:000007">
    <property type="entry name" value="Probable polyketide synthase pks17"/>
    <property type="match status" value="1"/>
</dbReference>
<dbReference type="Gene3D" id="3.30.70.3290">
    <property type="match status" value="1"/>
</dbReference>
<dbReference type="Gene3D" id="3.40.47.10">
    <property type="match status" value="1"/>
</dbReference>
<dbReference type="Gene3D" id="6.10.40.10">
    <property type="match status" value="1"/>
</dbReference>
<dbReference type="Gene3D" id="1.10.1200.10">
    <property type="entry name" value="ACP-like"/>
    <property type="match status" value="1"/>
</dbReference>
<dbReference type="Gene3D" id="3.40.366.10">
    <property type="entry name" value="Malonyl-Coenzyme A Acyl Carrier Protein, domain 2"/>
    <property type="match status" value="1"/>
</dbReference>
<dbReference type="Gene3D" id="3.40.50.720">
    <property type="entry name" value="NAD(P)-binding Rossmann-like Domain"/>
    <property type="match status" value="1"/>
</dbReference>
<dbReference type="InterPro" id="IPR001227">
    <property type="entry name" value="Ac_transferase_dom_sf"/>
</dbReference>
<dbReference type="InterPro" id="IPR036736">
    <property type="entry name" value="ACP-like_sf"/>
</dbReference>
<dbReference type="InterPro" id="IPR014043">
    <property type="entry name" value="Acyl_transferase_dom"/>
</dbReference>
<dbReference type="InterPro" id="IPR016035">
    <property type="entry name" value="Acyl_Trfase/lysoPLipase"/>
</dbReference>
<dbReference type="InterPro" id="IPR018201">
    <property type="entry name" value="Ketoacyl_synth_AS"/>
</dbReference>
<dbReference type="InterPro" id="IPR014031">
    <property type="entry name" value="Ketoacyl_synth_C"/>
</dbReference>
<dbReference type="InterPro" id="IPR014030">
    <property type="entry name" value="Ketoacyl_synth_N"/>
</dbReference>
<dbReference type="InterPro" id="IPR016036">
    <property type="entry name" value="Malonyl_transacylase_ACP-bd"/>
</dbReference>
<dbReference type="InterPro" id="IPR036291">
    <property type="entry name" value="NAD(P)-bd_dom_sf"/>
</dbReference>
<dbReference type="InterPro" id="IPR015083">
    <property type="entry name" value="NorB/c/GfsB-D-like_docking"/>
</dbReference>
<dbReference type="InterPro" id="IPR032821">
    <property type="entry name" value="PKS_assoc"/>
</dbReference>
<dbReference type="InterPro" id="IPR020841">
    <property type="entry name" value="PKS_Beta-ketoAc_synthase_dom"/>
</dbReference>
<dbReference type="InterPro" id="IPR013968">
    <property type="entry name" value="PKS_KR"/>
</dbReference>
<dbReference type="InterPro" id="IPR050091">
    <property type="entry name" value="PKS_NRPS_Biosynth_Enz"/>
</dbReference>
<dbReference type="InterPro" id="IPR020806">
    <property type="entry name" value="PKS_PP-bd"/>
</dbReference>
<dbReference type="InterPro" id="IPR036299">
    <property type="entry name" value="Polyketide_synth_docking_sf"/>
</dbReference>
<dbReference type="InterPro" id="IPR009081">
    <property type="entry name" value="PP-bd_ACP"/>
</dbReference>
<dbReference type="InterPro" id="IPR006162">
    <property type="entry name" value="Ppantetheine_attach_site"/>
</dbReference>
<dbReference type="InterPro" id="IPR016039">
    <property type="entry name" value="Thiolase-like"/>
</dbReference>
<dbReference type="PANTHER" id="PTHR43775">
    <property type="entry name" value="FATTY ACID SYNTHASE"/>
    <property type="match status" value="1"/>
</dbReference>
<dbReference type="PANTHER" id="PTHR43775:SF51">
    <property type="entry name" value="INACTIVE PHENOLPHTHIOCEROL SYNTHESIS POLYKETIDE SYNTHASE TYPE I PKS1-RELATED"/>
    <property type="match status" value="1"/>
</dbReference>
<dbReference type="Pfam" id="PF00698">
    <property type="entry name" value="Acyl_transf_1"/>
    <property type="match status" value="1"/>
</dbReference>
<dbReference type="Pfam" id="PF08990">
    <property type="entry name" value="Docking"/>
    <property type="match status" value="1"/>
</dbReference>
<dbReference type="Pfam" id="PF16197">
    <property type="entry name" value="KAsynt_C_assoc"/>
    <property type="match status" value="1"/>
</dbReference>
<dbReference type="Pfam" id="PF00109">
    <property type="entry name" value="ketoacyl-synt"/>
    <property type="match status" value="1"/>
</dbReference>
<dbReference type="Pfam" id="PF02801">
    <property type="entry name" value="Ketoacyl-synt_C"/>
    <property type="match status" value="1"/>
</dbReference>
<dbReference type="Pfam" id="PF08659">
    <property type="entry name" value="KR"/>
    <property type="match status" value="1"/>
</dbReference>
<dbReference type="Pfam" id="PF00550">
    <property type="entry name" value="PP-binding"/>
    <property type="match status" value="1"/>
</dbReference>
<dbReference type="SMART" id="SM00827">
    <property type="entry name" value="PKS_AT"/>
    <property type="match status" value="1"/>
</dbReference>
<dbReference type="SMART" id="SM00822">
    <property type="entry name" value="PKS_KR"/>
    <property type="match status" value="1"/>
</dbReference>
<dbReference type="SMART" id="SM00825">
    <property type="entry name" value="PKS_KS"/>
    <property type="match status" value="1"/>
</dbReference>
<dbReference type="SMART" id="SM00823">
    <property type="entry name" value="PKS_PP"/>
    <property type="match status" value="1"/>
</dbReference>
<dbReference type="SMART" id="SM01294">
    <property type="entry name" value="PKS_PP_betabranch"/>
    <property type="match status" value="1"/>
</dbReference>
<dbReference type="SUPFAM" id="SSF47336">
    <property type="entry name" value="ACP-like"/>
    <property type="match status" value="1"/>
</dbReference>
<dbReference type="SUPFAM" id="SSF101173">
    <property type="entry name" value="Docking domain B of the erythromycin polyketide synthase (DEBS)"/>
    <property type="match status" value="1"/>
</dbReference>
<dbReference type="SUPFAM" id="SSF52151">
    <property type="entry name" value="FabD/lysophospholipase-like"/>
    <property type="match status" value="1"/>
</dbReference>
<dbReference type="SUPFAM" id="SSF51735">
    <property type="entry name" value="NAD(P)-binding Rossmann-fold domains"/>
    <property type="match status" value="2"/>
</dbReference>
<dbReference type="SUPFAM" id="SSF55048">
    <property type="entry name" value="Probable ACP-binding domain of malonyl-CoA ACP transacylase"/>
    <property type="match status" value="1"/>
</dbReference>
<dbReference type="SUPFAM" id="SSF53901">
    <property type="entry name" value="Thiolase-like"/>
    <property type="match status" value="1"/>
</dbReference>
<dbReference type="PROSITE" id="PS50075">
    <property type="entry name" value="CARRIER"/>
    <property type="match status" value="1"/>
</dbReference>
<dbReference type="PROSITE" id="PS00606">
    <property type="entry name" value="KS3_1"/>
    <property type="match status" value="1"/>
</dbReference>
<dbReference type="PROSITE" id="PS52004">
    <property type="entry name" value="KS3_2"/>
    <property type="match status" value="1"/>
</dbReference>
<dbReference type="PROSITE" id="PS00012">
    <property type="entry name" value="PHOSPHOPANTETHEINE"/>
    <property type="match status" value="1"/>
</dbReference>
<evidence type="ECO:0000250" key="1">
    <source>
        <dbReference type="UniProtKB" id="Q03131"/>
    </source>
</evidence>
<evidence type="ECO:0000250" key="2">
    <source>
        <dbReference type="UniProtKB" id="Q03132"/>
    </source>
</evidence>
<evidence type="ECO:0000250" key="3">
    <source>
        <dbReference type="UniProtKB" id="Q03133"/>
    </source>
</evidence>
<evidence type="ECO:0000250" key="4">
    <source>
        <dbReference type="UniProtKB" id="Q9ZGI4"/>
    </source>
</evidence>
<evidence type="ECO:0000255" key="5">
    <source>
        <dbReference type="PROSITE-ProRule" id="PRU00258"/>
    </source>
</evidence>
<evidence type="ECO:0000255" key="6">
    <source>
        <dbReference type="PROSITE-ProRule" id="PRU01348"/>
    </source>
</evidence>
<evidence type="ECO:0000256" key="7">
    <source>
        <dbReference type="SAM" id="MobiDB-lite"/>
    </source>
</evidence>
<evidence type="ECO:0000269" key="8">
    <source>
    </source>
</evidence>
<evidence type="ECO:0000269" key="9">
    <source>
    </source>
</evidence>
<evidence type="ECO:0000269" key="10">
    <source>
    </source>
</evidence>
<evidence type="ECO:0000303" key="11">
    <source>
    </source>
</evidence>
<evidence type="ECO:0000303" key="12">
    <source>
    </source>
</evidence>
<evidence type="ECO:0000305" key="13"/>
<evidence type="ECO:0000305" key="14">
    <source>
    </source>
</evidence>
<evidence type="ECO:0000305" key="15">
    <source>
    </source>
</evidence>
<evidence type="ECO:0000305" key="16">
    <source>
    </source>
</evidence>
<evidence type="ECO:0000312" key="17">
    <source>
        <dbReference type="EMBL" id="CUM38836.1"/>
    </source>
</evidence>
<evidence type="ECO:0007829" key="18">
    <source>
        <dbReference type="PDB" id="3F5H"/>
    </source>
</evidence>
<proteinExistence type="evidence at protein level"/>
<protein>
    <recommendedName>
        <fullName evidence="11">Pikromycin polyketide synthase component PikAIII</fullName>
        <shortName evidence="11">Pikromycin PKS component PikAIII</shortName>
        <ecNumber evidence="8 15">2.3.1.239</ecNumber>
        <ecNumber evidence="8 15">2.3.1.240</ecNumber>
    </recommendedName>
    <alternativeName>
        <fullName evidence="13">Narbonolide/10-deoxymethynolide synthase PikA3, module 5</fullName>
    </alternativeName>
    <alternativeName>
        <fullName evidence="13">Narbonolide/10-deoxymethynolide synthase PikAIII</fullName>
    </alternativeName>
    <alternativeName>
        <fullName evidence="11">Type I modular polyketide synthase PikAIII</fullName>
        <shortName evidence="11">PKS</shortName>
    </alternativeName>
</protein>
<organism>
    <name type="scientific">Streptomyces venezuelae</name>
    <dbReference type="NCBI Taxonomy" id="54571"/>
    <lineage>
        <taxon>Bacteria</taxon>
        <taxon>Bacillati</taxon>
        <taxon>Actinomycetota</taxon>
        <taxon>Actinomycetes</taxon>
        <taxon>Kitasatosporales</taxon>
        <taxon>Streptomycetaceae</taxon>
        <taxon>Streptomyces</taxon>
    </lineage>
</organism>
<keyword id="KW-0002">3D-structure</keyword>
<keyword id="KW-0012">Acyltransferase</keyword>
<keyword id="KW-0045">Antibiotic biosynthesis</keyword>
<keyword id="KW-0511">Multifunctional enzyme</keyword>
<keyword id="KW-0521">NADP</keyword>
<keyword id="KW-0596">Phosphopantetheine</keyword>
<keyword id="KW-0597">Phosphoprotein</keyword>
<keyword id="KW-0808">Transferase</keyword>
<accession>Q9ZGI3</accession>
<feature type="chain" id="PRO_0000436359" description="Pikromycin polyketide synthase component PikAIII">
    <location>
        <begin position="1"/>
        <end position="1562"/>
    </location>
</feature>
<feature type="domain" description="Ketosynthase family 3 (KS3)" evidence="6">
    <location>
        <begin position="34"/>
        <end position="464"/>
    </location>
</feature>
<feature type="domain" description="Carrier" evidence="5">
    <location>
        <begin position="1403"/>
        <end position="1478"/>
    </location>
</feature>
<feature type="region of interest" description="Module 5" evidence="13">
    <location>
        <begin position="37"/>
        <end position="1475"/>
    </location>
</feature>
<feature type="region of interest" description="Acyltransferase" evidence="13">
    <location>
        <begin position="565"/>
        <end position="866"/>
    </location>
</feature>
<feature type="region of interest" description="Beta-ketoacyl reductase" evidence="13">
    <location>
        <begin position="1116"/>
        <end position="1293"/>
    </location>
</feature>
<feature type="region of interest" description="Disordered" evidence="7">
    <location>
        <begin position="1519"/>
        <end position="1548"/>
    </location>
</feature>
<feature type="compositionally biased region" description="Low complexity" evidence="7">
    <location>
        <begin position="1532"/>
        <end position="1541"/>
    </location>
</feature>
<feature type="active site" description="Acyl-thioester intermediate; for beta-ketoacyl synthase activity" evidence="6 15">
    <location>
        <position position="209"/>
    </location>
</feature>
<feature type="active site" description="For beta-ketoacyl synthase activity" evidence="6">
    <location>
        <position position="344"/>
    </location>
</feature>
<feature type="active site" description="For beta-ketoacyl synthase activity" evidence="6">
    <location>
        <position position="384"/>
    </location>
</feature>
<feature type="active site" description="Acyl-ester intermediate; for acyltransferase activity" evidence="3">
    <location>
        <position position="655"/>
    </location>
</feature>
<feature type="active site" description="Acyl-ester intermediate; for beta-ketoacyl reductase activity" evidence="2 4">
    <location>
        <position position="1263"/>
    </location>
</feature>
<feature type="binding site" evidence="1">
    <location>
        <begin position="1124"/>
        <end position="1127"/>
    </location>
    <ligand>
        <name>NADP(+)</name>
        <dbReference type="ChEBI" id="CHEBI:58349"/>
        <note>for beta-ketoacyl reductase activity</note>
    </ligand>
</feature>
<feature type="binding site" evidence="1">
    <location>
        <begin position="1147"/>
        <end position="1150"/>
    </location>
    <ligand>
        <name>NADP(+)</name>
        <dbReference type="ChEBI" id="CHEBI:58349"/>
        <note>for beta-ketoacyl reductase activity</note>
    </ligand>
</feature>
<feature type="binding site" evidence="1">
    <location>
        <begin position="1176"/>
        <end position="1177"/>
    </location>
    <ligand>
        <name>NADP(+)</name>
        <dbReference type="ChEBI" id="CHEBI:58349"/>
        <note>for beta-ketoacyl reductase activity</note>
    </ligand>
</feature>
<feature type="binding site" evidence="1">
    <location>
        <position position="1226"/>
    </location>
    <ligand>
        <name>NADP(+)</name>
        <dbReference type="ChEBI" id="CHEBI:58349"/>
        <note>for beta-ketoacyl reductase activity</note>
    </ligand>
</feature>
<feature type="binding site" evidence="1">
    <location>
        <begin position="1248"/>
        <end position="1249"/>
    </location>
    <ligand>
        <name>NADP(+)</name>
        <dbReference type="ChEBI" id="CHEBI:58349"/>
        <note>for beta-ketoacyl reductase activity</note>
    </ligand>
</feature>
<feature type="modified residue" description="O-(pantetheine 4'-phosphoryl)serine" evidence="5 15">
    <location>
        <position position="1438"/>
    </location>
</feature>
<feature type="mutagenesis site" description="Exhibits 10-fold reduced formation of the 10-deoxymethynolide macrolactone." evidence="10">
    <original>E</original>
    <variation>A</variation>
    <location>
        <position position="735"/>
    </location>
</feature>
<feature type="mutagenesis site" description="Exhibits 5-fold reduced formation of the 10-deoxymethynolide macrolactone." evidence="10">
    <original>R</original>
    <variation>A</variation>
    <location>
        <position position="747"/>
    </location>
</feature>
<feature type="mutagenesis site" description="Exhibits a reduced formation of the 10-deoxymethynolide macrolactone." evidence="10">
    <original>E</original>
    <variation>R</variation>
    <location>
        <position position="766"/>
    </location>
</feature>
<feature type="mutagenesis site" description="Exhibits a reduced formation of the 10-deoxymethynolide macrolactone." evidence="10">
    <original>E</original>
    <variation>R</variation>
    <location>
        <position position="768"/>
    </location>
</feature>
<feature type="mutagenesis site" description="Exhibits 14-fold reduced formation of the 10-deoxymethynolide macrolactone." evidence="10">
    <original>R</original>
    <variation>E</variation>
    <location>
        <position position="1133"/>
    </location>
</feature>
<feature type="mutagenesis site" description="Exhibits 2-fold reduced formation of the 10-deoxymethynolide macrolactone." evidence="10">
    <original>H</original>
    <variation>E</variation>
    <location>
        <position position="1137"/>
    </location>
</feature>
<feature type="mutagenesis site" description="Exhibits 8-fold reduced formation of the 10-deoxymethynolide macrolactone." evidence="10">
    <original>R</original>
    <variation>E</variation>
    <location>
        <position position="1308"/>
    </location>
</feature>
<feature type="helix" evidence="18">
    <location>
        <begin position="1544"/>
        <end position="1546"/>
    </location>
</feature>
<feature type="helix" evidence="18">
    <location>
        <begin position="1549"/>
        <end position="1557"/>
    </location>
</feature>
<feature type="helix" evidence="18">
    <location>
        <begin position="1559"/>
        <end position="1562"/>
    </location>
</feature>
<comment type="function">
    <text evidence="8 10 14">Involved in the biosynthesis of 12- and 14-membered ring macrolactone antibiotics such as methymycin and neomethymycin, and pikromycin and narbomycin, respectively. Component of the pikromycin PKS which catalyzes the biosynthesis of both precursors 10-deoxymethynolide (12-membered ring macrolactone) and narbonolide (14-membered ring macrolactone). Chain elongation through PikAI, PikAII and PikAIII followed by thioesterase catalyzed termination results in the production of 10-deoxymethynolide, while continued elongation through PikAIV, followed by thioesterase (TE) catalyzed cyclization results in the biosynthesis of the narbonolide.</text>
</comment>
<comment type="catalytic activity">
    <reaction evidence="8 15">
        <text>5 (S)-methylmalonyl-CoA + malonyl-CoA + 5 NADPH + 11 H(+) = 10-deoxymethynolide + 6 CO2 + 5 NADP(+) + 6 CoA + 2 H2O</text>
        <dbReference type="Rhea" id="RHEA:43056"/>
        <dbReference type="ChEBI" id="CHEBI:15377"/>
        <dbReference type="ChEBI" id="CHEBI:15378"/>
        <dbReference type="ChEBI" id="CHEBI:16526"/>
        <dbReference type="ChEBI" id="CHEBI:29461"/>
        <dbReference type="ChEBI" id="CHEBI:57287"/>
        <dbReference type="ChEBI" id="CHEBI:57327"/>
        <dbReference type="ChEBI" id="CHEBI:57384"/>
        <dbReference type="ChEBI" id="CHEBI:57783"/>
        <dbReference type="ChEBI" id="CHEBI:58349"/>
        <dbReference type="EC" id="2.3.1.239"/>
    </reaction>
</comment>
<comment type="catalytic activity">
    <reaction evidence="8 15">
        <text>6 (S)-methylmalonyl-CoA + malonyl-CoA + 5 NADPH + 12 H(+) = narbonolide + 7 CO2 + 5 NADP(+) + 7 CoA + 2 H2O</text>
        <dbReference type="Rhea" id="RHEA:42844"/>
        <dbReference type="ChEBI" id="CHEBI:15377"/>
        <dbReference type="ChEBI" id="CHEBI:15378"/>
        <dbReference type="ChEBI" id="CHEBI:16526"/>
        <dbReference type="ChEBI" id="CHEBI:29650"/>
        <dbReference type="ChEBI" id="CHEBI:57287"/>
        <dbReference type="ChEBI" id="CHEBI:57327"/>
        <dbReference type="ChEBI" id="CHEBI:57384"/>
        <dbReference type="ChEBI" id="CHEBI:57783"/>
        <dbReference type="ChEBI" id="CHEBI:58349"/>
        <dbReference type="EC" id="2.3.1.240"/>
    </reaction>
</comment>
<comment type="cofactor">
    <cofactor evidence="15">
        <name>pantetheine 4'-phosphate</name>
        <dbReference type="ChEBI" id="CHEBI:47942"/>
    </cofactor>
    <text evidence="13">Binds 1 phosphopantetheine covalently.</text>
</comment>
<comment type="pathway">
    <text evidence="14 16">Antibiotic biosynthesis.</text>
</comment>
<comment type="subunit">
    <text evidence="9 14">Homodimer (PubMed:19146481). Pikromycin PKS consists of a combination of multimodular (PikAI and PikAII) and monomodular (PikAIII and PikAIV) polypeptides each coding for a functional synthase subunit which participates in 1 (monomodular) or 2 (multimodular) of the six FAS-like elongation steps required for formation of the polyketide. Module 1, 2, 3, 4, 5, and 6 participating in biosynthesis steps 1, 2, 3, 4, 5, and 6, respectively.</text>
</comment>
<comment type="interaction">
    <interactant intactId="EBI-9023465">
        <id>Q9ZGI3</id>
    </interactant>
    <interactant intactId="EBI-9023465">
        <id>Q9ZGI3</id>
        <label>pikAIII</label>
    </interactant>
    <organismsDiffer>false</organismsDiffer>
    <experiments>3</experiments>
</comment>
<comment type="miscellaneous">
    <text evidence="14">Type I modular polyketide synthases (PKSs) catalyze the step-wise condensation of simple carboxylic acid derivatives. Organizationally, type I PKSs are arranged into modules, wherein each module is comprised of a set of catalytic activities that is responsible for a single elongation of the polyketide chain and the appropriate reductive processing of the beta-keto functionality. A minimal elongation module contains an acyl transferase (AT) domain, an acyl-carrier protein (ACP) domain, and a ketosynthase (KS) domain. The AT domain is responsible for loading the methylmalonyl-CoA extender unit onto the phosphopantetheinylated ACP domain. Subsequently, the KS domain decarboxylates and then condenses the ACP-bound extender unit with the growing polyketide chain obtained from the preceding module to yield an ACP-bound beta-ketoacyl intermediate. In addition to the three core domains, each elongation module may contain up to three additional domains: a ketoreductase (KR), dehydratase (DH), and an enoyl reductase (ER) that are responsible for the reductive processing of the beta-keto functionality prior to the next extension step. The presence of a KR domain alone gives rise to a beta-hydroxyl functionality, the presence of both a KR and a DH domain generates an alkene, while the combination of KR, DH, and ER results in complete reduction to the alkane. Finally, a thioesterase (TE) domain, typically found at the terminus of the last elongation module, catalyzes the termination of polyketide biosynthesis. The activity of this domain results in cleavage of the acyl chain from the adjacent ACP and formation of the macrocyclic ring.</text>
</comment>
<sequence>MANNEDKLRDYLKRVTAELQQNTRRLREIEGRTHEPVAIVGMACRLPGGVASPEDLWQLVAGDGDAISEFPQDRGWDVEGLYDPDPDASGRTYCRSGGFLHDAGEFDADFFGISPREALAMDPQQRLSLTTAWEAIESAGIDPTALKGSGLGVFVGGWHTGYTSGQTTAVQSPELEGHLVSGAALGFLSGRIAYVLGTDGPALTVDTACSSSLVALHLAVQALRKGECDMALAGGVTVMPNADLFVQFSRQRGLAADGRSKAFATSADGFGPAEGAGVLLVERLSDARRNGHRILAVVRGSAVNQDGASNGLTAPHGPSQQRVIRRALADARLAPGDVDVVEAHGTGTRLGDPIEAQALIATYGQEKSSEQPLRLGALKSNIGHTQAAAGVAGVIKMVQAMRHGLLPKTLHVDEPSDQIDWSAGTVELLTEAVDWPEKQDGGLRRAAVSSFGISGTNAHVVLEEAPAVEDSPAVEPPAGGGVVPWPVSAKTPAALDAQIGQLAAYADGRTDVDPAVAARALVDSRTAMEHRAVAVGDSREALRDALRMPEGLVRGTSSDVGRVAFVFPGQGTQWAGMGAELLDSSPEFAASMAECETALSRYVDWSLEAVVRQEPGAPTLDRVDVVQPVTFAVMVSLAKVWQHHGITPQAVVGHSQGEIAAAYVAGALTLDDAARVVTLRSKSIAAHLAGKGGMISLALDEAAVLKRLSDFDGLSVAAVNGPTATVVSGDPTQIEELARTCEADGVRARIIPVDYASHSRQVEIIEKELAEVLAGLAPQAPHVPFFSTLEGTWITEPVLDGTYWYRNLRHRVGFAPAVETLAVDGFTHFIEVSAHPVLTMTLPETVTGLGTLRREQGGQERLVTSLAEAWANGLTIDWAPILPTATGHHPELPTYAFQTERFWLQSSAPTSAADDWRYRVEWKPLTASGQADLSGRWIVAVGSEPEAELLGALKAAGAEVDVLEAGADDDREALAARLTALTTGDGFTGVVSLLDDLVPQVAWVQALGDAGIKAPLWSVTQGAVSVGRLDTPADPDRAMLWGLGRVVALEHPERWAGLVDLPAQPDAAALAHLVTALSGATGEDQIAIRTTGLHARRLARAPLHGRRPTRDWQPHGTVLITGGTGALGSHAARWMAHHGAEHLLLVSRSGEQAPGATQLTAELTASGARVTIAACDVADPHAMRTLLDAIPAETPLTAVVHTAGAPGGDPLDVTGPEDIARILGAKTSGAEVLDDLLRGTPLDAFVLYSSNAGVWGSGSQGVYAAANAHLDALAARRRARGETATSVAWGLWAGDGMGRGADDAYWQRRGIRPMSPDRALDELAKALSHDETFVAVADVDWERFAPAFTVSRPSLLLDGVPEARQALAAPVGAPAPGDAAVAPTGQSSALAAITALPEPERRPALLTLVRTHAAAVLGHSSPDRVAPGRAFTELGFDSLTAVQLRNQLSTVVGNRLPATTVFDHPTPAALAAHLHEAYLAPAEPAPTDWEGRVRRALAELPLDRLRDAGVLDTVLRLTGIEPEPGSGGSDGGAADPGAEPEASIDDLDAEALIRMALGPRNT</sequence>
<name>PIKA3_STRVZ</name>
<gene>
    <name evidence="12" type="primary">pikAIII</name>
    <name evidence="17" type="ORF">BN2537_6637</name>
</gene>
<reference key="1">
    <citation type="journal article" date="1998" name="Proc. Natl. Acad. Sci. U.S.A.">
        <title>A gene cluster for macrolide antibiotic biosynthesis in Streptomyces venezuelae: architecture of metabolic diversity.</title>
        <authorList>
            <person name="Xue Y."/>
            <person name="Zhao L."/>
            <person name="Liu H.W."/>
            <person name="Sherman D.H."/>
        </authorList>
    </citation>
    <scope>NUCLEOTIDE SEQUENCE [GENOMIC DNA]</scope>
    <scope>PATHWAY</scope>
    <source>
        <strain>ATCC 15439 / DSM 41110 / IMRU3627 / M-2140</strain>
    </source>
</reference>
<reference key="2">
    <citation type="submission" date="2015-08" db="EMBL/GenBank/DDBJ databases">
        <authorList>
            <person name="Babu N.S."/>
            <person name="Beckwith C.J."/>
            <person name="Beseler K.G."/>
            <person name="Brison A."/>
            <person name="Carone J.V."/>
            <person name="Caskin T.P."/>
            <person name="Diamond M."/>
            <person name="Durham M.E."/>
            <person name="Foxe J.M."/>
            <person name="Go M."/>
            <person name="Henderson B.A."/>
            <person name="Jones I.B."/>
            <person name="McGettigan J.A."/>
            <person name="Micheletti S.J."/>
            <person name="Nasrallah M.E."/>
            <person name="Ortiz D."/>
            <person name="Piller C.R."/>
            <person name="Privatt S.R."/>
            <person name="Schneider S.L."/>
            <person name="Sharp S."/>
            <person name="Smith T.C."/>
            <person name="Stanton J.D."/>
            <person name="Ullery H.E."/>
            <person name="Wilson R.J."/>
            <person name="Serrano M.G."/>
            <person name="Buck G."/>
            <person name="Lee V."/>
            <person name="Wang Y."/>
            <person name="Carvalho R."/>
            <person name="Voegtly L."/>
            <person name="Shi R."/>
            <person name="Duckworth R."/>
            <person name="Johnson A."/>
            <person name="Loviza R."/>
            <person name="Walstead R."/>
            <person name="Shah Z."/>
            <person name="Kiflezghi M."/>
            <person name="Wade K."/>
            <person name="Ball S.L."/>
            <person name="Bradley K.W."/>
            <person name="Asai D.J."/>
            <person name="Bowman C.A."/>
            <person name="Russell D.A."/>
            <person name="Pope W.H."/>
            <person name="Jacobs-Sera D."/>
            <person name="Hendrix R.W."/>
            <person name="Hatfull G.F."/>
        </authorList>
    </citation>
    <scope>NUCLEOTIDE SEQUENCE [GENOMIC DNA]</scope>
    <source>
        <strain>ATCC 15439 / DSM 41110 / IMRU3627 / M-2140</strain>
    </source>
</reference>
<reference key="3">
    <citation type="journal article" date="1999" name="Chem. Biol.">
        <title>Elucidating the mechanism of chain termination switching in the picromycin/methymycin polyketide synthase.</title>
        <authorList>
            <person name="Tang L."/>
            <person name="Fu H."/>
            <person name="Betlach M.C."/>
            <person name="McDaniel R."/>
        </authorList>
    </citation>
    <scope>FUNCTION</scope>
    <scope>CATALYTIC ACTIVITY</scope>
</reference>
<reference key="4">
    <citation type="journal article" date="2009" name="Bioorg. Med. Chem.">
        <title>The methymycin/pikromycin pathway: a model for metabolic diversity in natural product biosynthesis.</title>
        <authorList>
            <person name="Kittendorf J.D."/>
            <person name="Sherman D.H."/>
        </authorList>
    </citation>
    <scope>FUNCTION</scope>
    <scope>PATHWAY</scope>
    <scope>SUBUNIT</scope>
</reference>
<reference key="5">
    <citation type="journal article" date="2014" name="Nature">
        <title>Structural rearrangements of a polyketide synthase module during its catalytic cycle.</title>
        <authorList>
            <person name="Whicher J.R."/>
            <person name="Dutta S."/>
            <person name="Hansen D.A."/>
            <person name="Hale W.A."/>
            <person name="Chemler J.A."/>
            <person name="Dosey A.M."/>
            <person name="Narayan A.R."/>
            <person name="Haakansson K."/>
            <person name="Sherman D.H."/>
            <person name="Smith J.L."/>
            <person name="Skiniotis G."/>
        </authorList>
    </citation>
    <scope>FUNCTION</scope>
    <scope>CATALYTIC ACTIVITY</scope>
    <scope>MUTAGENESIS OF GLU-735; ARG-747; GLU-766; GLU-768; ARG-1133; HIS-1137 AND ARG-1308</scope>
    <scope>ACTIVE SITE</scope>
    <scope>COFACTOR</scope>
    <scope>REACTION MECHANISM</scope>
    <scope>PHOSPHOPANTETHEINYLATION AT SER-1438</scope>
</reference>
<reference key="6">
    <citation type="journal article" date="2009" name="ACS Chem. Biol.">
        <title>Structural basis for binding specificity between subclasses of modular polyketide synthase docking domains.</title>
        <authorList>
            <person name="Buchholz T.J."/>
            <person name="Geders T.W."/>
            <person name="Bartley F.E."/>
            <person name="Reynolds K.A."/>
            <person name="Smith J.L."/>
            <person name="Sherman D.H."/>
        </authorList>
    </citation>
    <scope>X-RAY CRYSTALLOGRAPHY (1.75 ANGSTROMS) OF 1534-1562</scope>
    <scope>SUBUNIT</scope>
</reference>